<organism>
    <name type="scientific">Mycobacterium avium (strain 104)</name>
    <dbReference type="NCBI Taxonomy" id="243243"/>
    <lineage>
        <taxon>Bacteria</taxon>
        <taxon>Bacillati</taxon>
        <taxon>Actinomycetota</taxon>
        <taxon>Actinomycetes</taxon>
        <taxon>Mycobacteriales</taxon>
        <taxon>Mycobacteriaceae</taxon>
        <taxon>Mycobacterium</taxon>
        <taxon>Mycobacterium avium complex (MAC)</taxon>
    </lineage>
</organism>
<gene>
    <name evidence="1" type="primary">mraZ</name>
    <name type="ordered locus">MAV_2327</name>
</gene>
<feature type="chain" id="PRO_1000062896" description="Transcriptional regulator MraZ">
    <location>
        <begin position="1"/>
        <end position="143"/>
    </location>
</feature>
<feature type="domain" description="SpoVT-AbrB 1" evidence="2">
    <location>
        <begin position="5"/>
        <end position="47"/>
    </location>
</feature>
<feature type="domain" description="SpoVT-AbrB 2" evidence="2">
    <location>
        <begin position="76"/>
        <end position="119"/>
    </location>
</feature>
<evidence type="ECO:0000255" key="1">
    <source>
        <dbReference type="HAMAP-Rule" id="MF_01008"/>
    </source>
</evidence>
<evidence type="ECO:0000255" key="2">
    <source>
        <dbReference type="PROSITE-ProRule" id="PRU01076"/>
    </source>
</evidence>
<keyword id="KW-0963">Cytoplasm</keyword>
<keyword id="KW-0238">DNA-binding</keyword>
<keyword id="KW-0677">Repeat</keyword>
<keyword id="KW-0804">Transcription</keyword>
<keyword id="KW-0805">Transcription regulation</keyword>
<dbReference type="EMBL" id="CP000479">
    <property type="protein sequence ID" value="ABK64786.1"/>
    <property type="molecule type" value="Genomic_DNA"/>
</dbReference>
<dbReference type="RefSeq" id="WP_003872235.1">
    <property type="nucleotide sequence ID" value="NC_008595.1"/>
</dbReference>
<dbReference type="SMR" id="A0QF43"/>
<dbReference type="GeneID" id="75269876"/>
<dbReference type="KEGG" id="mav:MAV_2327"/>
<dbReference type="HOGENOM" id="CLU_107907_0_5_11"/>
<dbReference type="Proteomes" id="UP000001574">
    <property type="component" value="Chromosome"/>
</dbReference>
<dbReference type="GO" id="GO:0005737">
    <property type="term" value="C:cytoplasm"/>
    <property type="evidence" value="ECO:0007669"/>
    <property type="project" value="UniProtKB-UniRule"/>
</dbReference>
<dbReference type="GO" id="GO:0009295">
    <property type="term" value="C:nucleoid"/>
    <property type="evidence" value="ECO:0007669"/>
    <property type="project" value="UniProtKB-SubCell"/>
</dbReference>
<dbReference type="GO" id="GO:0003700">
    <property type="term" value="F:DNA-binding transcription factor activity"/>
    <property type="evidence" value="ECO:0007669"/>
    <property type="project" value="UniProtKB-UniRule"/>
</dbReference>
<dbReference type="GO" id="GO:0000976">
    <property type="term" value="F:transcription cis-regulatory region binding"/>
    <property type="evidence" value="ECO:0007669"/>
    <property type="project" value="TreeGrafter"/>
</dbReference>
<dbReference type="GO" id="GO:2000143">
    <property type="term" value="P:negative regulation of DNA-templated transcription initiation"/>
    <property type="evidence" value="ECO:0007669"/>
    <property type="project" value="TreeGrafter"/>
</dbReference>
<dbReference type="CDD" id="cd16321">
    <property type="entry name" value="MraZ_C"/>
    <property type="match status" value="1"/>
</dbReference>
<dbReference type="CDD" id="cd16320">
    <property type="entry name" value="MraZ_N"/>
    <property type="match status" value="1"/>
</dbReference>
<dbReference type="FunFam" id="3.40.1550.20:FF:000004">
    <property type="entry name" value="Transcriptional regulator MraZ"/>
    <property type="match status" value="1"/>
</dbReference>
<dbReference type="Gene3D" id="3.40.1550.20">
    <property type="entry name" value="Transcriptional regulator MraZ domain"/>
    <property type="match status" value="1"/>
</dbReference>
<dbReference type="HAMAP" id="MF_01008">
    <property type="entry name" value="MraZ"/>
    <property type="match status" value="1"/>
</dbReference>
<dbReference type="InterPro" id="IPR003444">
    <property type="entry name" value="MraZ"/>
</dbReference>
<dbReference type="InterPro" id="IPR035644">
    <property type="entry name" value="MraZ_C"/>
</dbReference>
<dbReference type="InterPro" id="IPR020603">
    <property type="entry name" value="MraZ_dom"/>
</dbReference>
<dbReference type="InterPro" id="IPR035642">
    <property type="entry name" value="MraZ_N"/>
</dbReference>
<dbReference type="InterPro" id="IPR038619">
    <property type="entry name" value="MraZ_sf"/>
</dbReference>
<dbReference type="InterPro" id="IPR007159">
    <property type="entry name" value="SpoVT-AbrB_dom"/>
</dbReference>
<dbReference type="InterPro" id="IPR037914">
    <property type="entry name" value="SpoVT-AbrB_sf"/>
</dbReference>
<dbReference type="NCBIfam" id="TIGR00242">
    <property type="entry name" value="division/cell wall cluster transcriptional repressor MraZ"/>
    <property type="match status" value="1"/>
</dbReference>
<dbReference type="PANTHER" id="PTHR34701">
    <property type="entry name" value="TRANSCRIPTIONAL REGULATOR MRAZ"/>
    <property type="match status" value="1"/>
</dbReference>
<dbReference type="PANTHER" id="PTHR34701:SF1">
    <property type="entry name" value="TRANSCRIPTIONAL REGULATOR MRAZ"/>
    <property type="match status" value="1"/>
</dbReference>
<dbReference type="Pfam" id="PF02381">
    <property type="entry name" value="MraZ"/>
    <property type="match status" value="2"/>
</dbReference>
<dbReference type="SUPFAM" id="SSF89447">
    <property type="entry name" value="AbrB/MazE/MraZ-like"/>
    <property type="match status" value="1"/>
</dbReference>
<dbReference type="PROSITE" id="PS51740">
    <property type="entry name" value="SPOVT_ABRB"/>
    <property type="match status" value="2"/>
</dbReference>
<reference key="1">
    <citation type="submission" date="2006-10" db="EMBL/GenBank/DDBJ databases">
        <authorList>
            <person name="Fleischmann R.D."/>
            <person name="Dodson R.J."/>
            <person name="Haft D.H."/>
            <person name="Merkel J.S."/>
            <person name="Nelson W.C."/>
            <person name="Fraser C.M."/>
        </authorList>
    </citation>
    <scope>NUCLEOTIDE SEQUENCE [LARGE SCALE GENOMIC DNA]</scope>
    <source>
        <strain>104</strain>
    </source>
</reference>
<name>MRAZ_MYCA1</name>
<proteinExistence type="inferred from homology"/>
<protein>
    <recommendedName>
        <fullName>Transcriptional regulator MraZ</fullName>
    </recommendedName>
</protein>
<comment type="subunit">
    <text evidence="1">Forms oligomers.</text>
</comment>
<comment type="subcellular location">
    <subcellularLocation>
        <location evidence="1">Cytoplasm</location>
        <location evidence="1">Nucleoid</location>
    </subcellularLocation>
</comment>
<comment type="similarity">
    <text evidence="1">Belongs to the MraZ family.</text>
</comment>
<sequence>MFLGTYTPKLDDKGRLTLPAKFRDALAGGLMVTKSQDHSLAVYPRAEFEQLARRASKASKSNPDARAFLRNLAAGTDEQHPDAQGRITLSADHRRYASLSKDCVVIGAVDYLEIWDAQAWQDYQQTHEENFSAASDEALGDII</sequence>
<accession>A0QF43</accession>